<reference key="1">
    <citation type="journal article" date="2004" name="Nature">
        <title>Genome evolution in yeasts.</title>
        <authorList>
            <person name="Dujon B."/>
            <person name="Sherman D."/>
            <person name="Fischer G."/>
            <person name="Durrens P."/>
            <person name="Casaregola S."/>
            <person name="Lafontaine I."/>
            <person name="de Montigny J."/>
            <person name="Marck C."/>
            <person name="Neuveglise C."/>
            <person name="Talla E."/>
            <person name="Goffard N."/>
            <person name="Frangeul L."/>
            <person name="Aigle M."/>
            <person name="Anthouard V."/>
            <person name="Babour A."/>
            <person name="Barbe V."/>
            <person name="Barnay S."/>
            <person name="Blanchin S."/>
            <person name="Beckerich J.-M."/>
            <person name="Beyne E."/>
            <person name="Bleykasten C."/>
            <person name="Boisrame A."/>
            <person name="Boyer J."/>
            <person name="Cattolico L."/>
            <person name="Confanioleri F."/>
            <person name="de Daruvar A."/>
            <person name="Despons L."/>
            <person name="Fabre E."/>
            <person name="Fairhead C."/>
            <person name="Ferry-Dumazet H."/>
            <person name="Groppi A."/>
            <person name="Hantraye F."/>
            <person name="Hennequin C."/>
            <person name="Jauniaux N."/>
            <person name="Joyet P."/>
            <person name="Kachouri R."/>
            <person name="Kerrest A."/>
            <person name="Koszul R."/>
            <person name="Lemaire M."/>
            <person name="Lesur I."/>
            <person name="Ma L."/>
            <person name="Muller H."/>
            <person name="Nicaud J.-M."/>
            <person name="Nikolski M."/>
            <person name="Oztas S."/>
            <person name="Ozier-Kalogeropoulos O."/>
            <person name="Pellenz S."/>
            <person name="Potier S."/>
            <person name="Richard G.-F."/>
            <person name="Straub M.-L."/>
            <person name="Suleau A."/>
            <person name="Swennen D."/>
            <person name="Tekaia F."/>
            <person name="Wesolowski-Louvel M."/>
            <person name="Westhof E."/>
            <person name="Wirth B."/>
            <person name="Zeniou-Meyer M."/>
            <person name="Zivanovic Y."/>
            <person name="Bolotin-Fukuhara M."/>
            <person name="Thierry A."/>
            <person name="Bouchier C."/>
            <person name="Caudron B."/>
            <person name="Scarpelli C."/>
            <person name="Gaillardin C."/>
            <person name="Weissenbach J."/>
            <person name="Wincker P."/>
            <person name="Souciet J.-L."/>
        </authorList>
    </citation>
    <scope>NUCLEOTIDE SEQUENCE [LARGE SCALE GENOMIC DNA]</scope>
    <source>
        <strain>ATCC 36239 / CBS 767 / BCRC 21394 / JCM 1990 / NBRC 0083 / IGC 2968</strain>
    </source>
</reference>
<sequence>MRSISTLLFIISTFISLVSALQLAIPATTNPDPFCIRDFVQEEQMVVVNIKTNGNSGDGQRLDLRIVDSLGNEYRRKNDIAGSVKIGFTSHNSAAFDICFTNQLERKWSKNTNFVREIELDVESGAAARDWNAVQAAEKLKPVEVDLRRIEETTYEISGELQYLKAREERMRDTNESTNSRVKWFSILVITSLVGLGAWQVQYLRHYFKVKHII</sequence>
<name>TMEDA_DEBHA</name>
<accession>Q6BTC2</accession>
<organism>
    <name type="scientific">Debaryomyces hansenii (strain ATCC 36239 / CBS 767 / BCRC 21394 / JCM 1990 / NBRC 0083 / IGC 2968)</name>
    <name type="common">Yeast</name>
    <name type="synonym">Torulaspora hansenii</name>
    <dbReference type="NCBI Taxonomy" id="284592"/>
    <lineage>
        <taxon>Eukaryota</taxon>
        <taxon>Fungi</taxon>
        <taxon>Dikarya</taxon>
        <taxon>Ascomycota</taxon>
        <taxon>Saccharomycotina</taxon>
        <taxon>Pichiomycetes</taxon>
        <taxon>Debaryomycetaceae</taxon>
        <taxon>Debaryomyces</taxon>
    </lineage>
</organism>
<proteinExistence type="inferred from homology"/>
<dbReference type="EMBL" id="CR382136">
    <property type="protein sequence ID" value="CAG86680.2"/>
    <property type="molecule type" value="Genomic_DNA"/>
</dbReference>
<dbReference type="RefSeq" id="XP_458548.2">
    <property type="nucleotide sequence ID" value="XM_458548.1"/>
</dbReference>
<dbReference type="SMR" id="Q6BTC2"/>
<dbReference type="FunCoup" id="Q6BTC2">
    <property type="interactions" value="1174"/>
</dbReference>
<dbReference type="STRING" id="284592.Q6BTC2"/>
<dbReference type="GeneID" id="2901206"/>
<dbReference type="KEGG" id="dha:DEHA2D01826g"/>
<dbReference type="VEuPathDB" id="FungiDB:DEHA2D01826g"/>
<dbReference type="eggNOG" id="KOG1691">
    <property type="taxonomic scope" value="Eukaryota"/>
</dbReference>
<dbReference type="HOGENOM" id="CLU_066963_3_0_1"/>
<dbReference type="InParanoid" id="Q6BTC2"/>
<dbReference type="OMA" id="DVFEACF"/>
<dbReference type="OrthoDB" id="759142at2759"/>
<dbReference type="Proteomes" id="UP000000599">
    <property type="component" value="Chromosome D"/>
</dbReference>
<dbReference type="GO" id="GO:0005789">
    <property type="term" value="C:endoplasmic reticulum membrane"/>
    <property type="evidence" value="ECO:0007669"/>
    <property type="project" value="UniProtKB-SubCell"/>
</dbReference>
<dbReference type="GO" id="GO:0000139">
    <property type="term" value="C:Golgi membrane"/>
    <property type="evidence" value="ECO:0007669"/>
    <property type="project" value="UniProtKB-SubCell"/>
</dbReference>
<dbReference type="GO" id="GO:0015031">
    <property type="term" value="P:protein transport"/>
    <property type="evidence" value="ECO:0007669"/>
    <property type="project" value="UniProtKB-KW"/>
</dbReference>
<dbReference type="GO" id="GO:0016192">
    <property type="term" value="P:vesicle-mediated transport"/>
    <property type="evidence" value="ECO:0007669"/>
    <property type="project" value="UniProtKB-KW"/>
</dbReference>
<dbReference type="InterPro" id="IPR015720">
    <property type="entry name" value="Emp24-like"/>
</dbReference>
<dbReference type="InterPro" id="IPR009038">
    <property type="entry name" value="GOLD_dom"/>
</dbReference>
<dbReference type="PANTHER" id="PTHR22811">
    <property type="entry name" value="TRANSMEMBRANE EMP24 DOMAIN-CONTAINING PROTEIN"/>
    <property type="match status" value="1"/>
</dbReference>
<dbReference type="Pfam" id="PF01105">
    <property type="entry name" value="EMP24_GP25L"/>
    <property type="match status" value="1"/>
</dbReference>
<dbReference type="SMART" id="SM01190">
    <property type="entry name" value="EMP24_GP25L"/>
    <property type="match status" value="1"/>
</dbReference>
<dbReference type="PROSITE" id="PS50866">
    <property type="entry name" value="GOLD"/>
    <property type="match status" value="1"/>
</dbReference>
<protein>
    <recommendedName>
        <fullName>Endoplasmic reticulum vesicle protein 25</fullName>
    </recommendedName>
</protein>
<evidence type="ECO:0000250" key="1"/>
<evidence type="ECO:0000255" key="2"/>
<evidence type="ECO:0000255" key="3">
    <source>
        <dbReference type="PROSITE-ProRule" id="PRU00096"/>
    </source>
</evidence>
<evidence type="ECO:0000305" key="4"/>
<keyword id="KW-0256">Endoplasmic reticulum</keyword>
<keyword id="KW-0931">ER-Golgi transport</keyword>
<keyword id="KW-0333">Golgi apparatus</keyword>
<keyword id="KW-0472">Membrane</keyword>
<keyword id="KW-0653">Protein transport</keyword>
<keyword id="KW-1185">Reference proteome</keyword>
<keyword id="KW-0732">Signal</keyword>
<keyword id="KW-0812">Transmembrane</keyword>
<keyword id="KW-1133">Transmembrane helix</keyword>
<keyword id="KW-0813">Transport</keyword>
<feature type="signal peptide" evidence="2">
    <location>
        <begin position="1"/>
        <end position="20"/>
    </location>
</feature>
<feature type="chain" id="PRO_0000237692" description="Endoplasmic reticulum vesicle protein 25">
    <location>
        <begin position="21"/>
        <end position="214"/>
    </location>
</feature>
<feature type="topological domain" description="Lumenal" evidence="2">
    <location>
        <begin position="21"/>
        <end position="183"/>
    </location>
</feature>
<feature type="transmembrane region" description="Helical" evidence="2">
    <location>
        <begin position="184"/>
        <end position="204"/>
    </location>
</feature>
<feature type="topological domain" description="Cytoplasmic" evidence="2">
    <location>
        <begin position="205"/>
        <end position="214"/>
    </location>
</feature>
<feature type="domain" description="GOLD" evidence="3">
    <location>
        <begin position="33"/>
        <end position="124"/>
    </location>
</feature>
<comment type="function">
    <text evidence="1">Constituent of COPII-coated endoplasmic reticulum-derived transport vesicles. Required for efficient transport of a subset of secretory proteins to the Golgi. Facilitates retrograde transport from the Golgi to the endoplasmic reticulum (By similarity).</text>
</comment>
<comment type="subcellular location">
    <subcellularLocation>
        <location evidence="1">Endoplasmic reticulum membrane</location>
        <topology evidence="1">Single-pass type I membrane protein</topology>
    </subcellularLocation>
    <subcellularLocation>
        <location evidence="1">Golgi apparatus membrane</location>
        <topology evidence="1">Single-pass type I membrane protein</topology>
    </subcellularLocation>
    <text evidence="1">Recycles between endoplasmic reticulum and Golgi.</text>
</comment>
<comment type="similarity">
    <text evidence="4">Belongs to the EMP24/GP25L family.</text>
</comment>
<gene>
    <name type="primary">ERV25</name>
    <name type="ordered locus">DEHA2D01826g</name>
</gene>